<comment type="function">
    <text evidence="1">Catalyzes the efflux of L-lysine.</text>
</comment>
<comment type="subcellular location">
    <subcellularLocation>
        <location evidence="4">Cell inner membrane</location>
        <topology evidence="3">Multi-pass membrane protein</topology>
    </subcellularLocation>
</comment>
<comment type="similarity">
    <text evidence="4">Belongs to the LysE/ArgO transporter (TC 2.A.75) family.</text>
</comment>
<accession>P64904</accession>
<accession>A0A1R3Y1Z7</accession>
<accession>Q10871</accession>
<accession>X2BJH6</accession>
<dbReference type="EMBL" id="LT708304">
    <property type="protein sequence ID" value="SIU00614.1"/>
    <property type="molecule type" value="Genomic_DNA"/>
</dbReference>
<dbReference type="RefSeq" id="NP_855658.1">
    <property type="nucleotide sequence ID" value="NC_002945.3"/>
</dbReference>
<dbReference type="RefSeq" id="WP_003409989.1">
    <property type="nucleotide sequence ID" value="NC_002945.4"/>
</dbReference>
<dbReference type="GeneID" id="45425965"/>
<dbReference type="KEGG" id="mbo:BQ2027_MB2008"/>
<dbReference type="PATRIC" id="fig|233413.5.peg.2206"/>
<dbReference type="Proteomes" id="UP000001419">
    <property type="component" value="Chromosome"/>
</dbReference>
<dbReference type="GO" id="GO:0005886">
    <property type="term" value="C:plasma membrane"/>
    <property type="evidence" value="ECO:0007669"/>
    <property type="project" value="UniProtKB-SubCell"/>
</dbReference>
<dbReference type="GO" id="GO:0015171">
    <property type="term" value="F:amino acid transmembrane transporter activity"/>
    <property type="evidence" value="ECO:0007669"/>
    <property type="project" value="TreeGrafter"/>
</dbReference>
<dbReference type="InterPro" id="IPR001123">
    <property type="entry name" value="LeuE-type"/>
</dbReference>
<dbReference type="InterPro" id="IPR004777">
    <property type="entry name" value="Lys/arg_exporter"/>
</dbReference>
<dbReference type="NCBIfam" id="TIGR00948">
    <property type="entry name" value="2a75"/>
    <property type="match status" value="1"/>
</dbReference>
<dbReference type="PANTHER" id="PTHR30086">
    <property type="entry name" value="ARGININE EXPORTER PROTEIN ARGO"/>
    <property type="match status" value="1"/>
</dbReference>
<dbReference type="PANTHER" id="PTHR30086:SF20">
    <property type="entry name" value="ARGININE EXPORTER PROTEIN ARGO-RELATED"/>
    <property type="match status" value="1"/>
</dbReference>
<dbReference type="Pfam" id="PF01810">
    <property type="entry name" value="LysE"/>
    <property type="match status" value="1"/>
</dbReference>
<organism>
    <name type="scientific">Mycobacterium bovis (strain ATCC BAA-935 / AF2122/97)</name>
    <dbReference type="NCBI Taxonomy" id="233413"/>
    <lineage>
        <taxon>Bacteria</taxon>
        <taxon>Bacillati</taxon>
        <taxon>Actinomycetota</taxon>
        <taxon>Actinomycetes</taxon>
        <taxon>Mycobacteriales</taxon>
        <taxon>Mycobacteriaceae</taxon>
        <taxon>Mycobacterium</taxon>
        <taxon>Mycobacterium tuberculosis complex</taxon>
    </lineage>
</organism>
<protein>
    <recommendedName>
        <fullName evidence="1">Lysine exporter LysE</fullName>
    </recommendedName>
</protein>
<name>LYSE_MYCBO</name>
<proteinExistence type="inferred from homology"/>
<sequence length="199" mass="20776">MNSPLVVGFLACFTLIAAIGAQNAFVLRQGIQREHVLPVVALCTVSDIVLIAAGIAGFGALIGAHPRALNVVKFGGAAFLIGYGLLAARRAWRPVALIPSGATPVRLAEVLVTCAAFTFLNPHVYLDTVVLLGALANEHSDQRWLFGLGAVTASAVWFATLGFGAGRLRGLFTNPGSWRILDGLIAVMMVALGISLTVT</sequence>
<gene>
    <name evidence="2" type="primary">lysE</name>
    <name type="ordered locus">BQ2027_MB2008</name>
</gene>
<evidence type="ECO:0000250" key="1">
    <source>
        <dbReference type="UniProtKB" id="P94633"/>
    </source>
</evidence>
<evidence type="ECO:0000250" key="2">
    <source>
        <dbReference type="UniProtKB" id="P9WK31"/>
    </source>
</evidence>
<evidence type="ECO:0000255" key="3"/>
<evidence type="ECO:0000305" key="4"/>
<feature type="chain" id="PRO_0000103917" description="Lysine exporter LysE">
    <location>
        <begin position="1"/>
        <end position="199"/>
    </location>
</feature>
<feature type="transmembrane region" description="Helical" evidence="3">
    <location>
        <begin position="6"/>
        <end position="26"/>
    </location>
</feature>
<feature type="transmembrane region" description="Helical" evidence="3">
    <location>
        <begin position="42"/>
        <end position="62"/>
    </location>
</feature>
<feature type="transmembrane region" description="Helical" evidence="3">
    <location>
        <begin position="68"/>
        <end position="88"/>
    </location>
</feature>
<feature type="transmembrane region" description="Helical" evidence="3">
    <location>
        <begin position="144"/>
        <end position="164"/>
    </location>
</feature>
<feature type="transmembrane region" description="Helical" evidence="3">
    <location>
        <begin position="178"/>
        <end position="198"/>
    </location>
</feature>
<keyword id="KW-0029">Amino-acid transport</keyword>
<keyword id="KW-0997">Cell inner membrane</keyword>
<keyword id="KW-1003">Cell membrane</keyword>
<keyword id="KW-0472">Membrane</keyword>
<keyword id="KW-1185">Reference proteome</keyword>
<keyword id="KW-0812">Transmembrane</keyword>
<keyword id="KW-1133">Transmembrane helix</keyword>
<keyword id="KW-0813">Transport</keyword>
<reference key="1">
    <citation type="journal article" date="2003" name="Proc. Natl. Acad. Sci. U.S.A.">
        <title>The complete genome sequence of Mycobacterium bovis.</title>
        <authorList>
            <person name="Garnier T."/>
            <person name="Eiglmeier K."/>
            <person name="Camus J.-C."/>
            <person name="Medina N."/>
            <person name="Mansoor H."/>
            <person name="Pryor M."/>
            <person name="Duthoy S."/>
            <person name="Grondin S."/>
            <person name="Lacroix C."/>
            <person name="Monsempe C."/>
            <person name="Simon S."/>
            <person name="Harris B."/>
            <person name="Atkin R."/>
            <person name="Doggett J."/>
            <person name="Mayes R."/>
            <person name="Keating L."/>
            <person name="Wheeler P.R."/>
            <person name="Parkhill J."/>
            <person name="Barrell B.G."/>
            <person name="Cole S.T."/>
            <person name="Gordon S.V."/>
            <person name="Hewinson R.G."/>
        </authorList>
    </citation>
    <scope>NUCLEOTIDE SEQUENCE [LARGE SCALE GENOMIC DNA]</scope>
    <source>
        <strain>ATCC BAA-935 / AF2122/97</strain>
    </source>
</reference>
<reference key="2">
    <citation type="journal article" date="2017" name="Genome Announc.">
        <title>Updated reference genome sequence and annotation of Mycobacterium bovis AF2122/97.</title>
        <authorList>
            <person name="Malone K.M."/>
            <person name="Farrell D."/>
            <person name="Stuber T.P."/>
            <person name="Schubert O.T."/>
            <person name="Aebersold R."/>
            <person name="Robbe-Austerman S."/>
            <person name="Gordon S.V."/>
        </authorList>
    </citation>
    <scope>NUCLEOTIDE SEQUENCE [LARGE SCALE GENOMIC DNA]</scope>
    <scope>GENOME REANNOTATION</scope>
    <source>
        <strain>ATCC BAA-935 / AF2122/97</strain>
    </source>
</reference>